<accession>Q55FJ6</accession>
<sequence>MEKYQFIKQVGDGAYGDVIKAIDVKTGEIVAIKRMKKKFSDWKECIQLREIKALKKLKHPNIVKLLEIILERDELFFVFEYLENNLYESIKDRTKLLPETTIRNIIYQILQALHFMHTNGFFHRDLKPENIMLVGERLKIADFGLAREIESKPPFTDYISTRWYRAPEVLLRCTYYNAPIDIWAVGAIMAELYSLKPMFPGSSEIDQLFKICTIMGSPTSATWIDGIKLANSMGFTFPNVQPPSINPLSTLLPNANQDAIELITDLLQYDPLKRPTPLQALQHRYFKVSIPSSILLKPNFIELSNKYLIKNGYINNNINNNSNYSNNNNNNNLNSNSENLNNVNKNNQQPHSPQKIQTPKPKNSFLRKSRYSYLNNVSLENVNNNNNNYNSNTTSGYYNQKLDSTPRLSPRIVRQQQQQILLPLIIQQQPPPQSQPPQSQPPPQSQPPPILTQQQQQQQQQQQQQQQLPSKTTIYHNTNHLNAPIPPNHQRGISPQFYNETTNNSKL</sequence>
<proteinExistence type="inferred from homology"/>
<dbReference type="EC" id="2.7.11.22"/>
<dbReference type="EMBL" id="AAFI02000003">
    <property type="protein sequence ID" value="EAL73492.1"/>
    <property type="molecule type" value="Genomic_DNA"/>
</dbReference>
<dbReference type="RefSeq" id="XP_647537.1">
    <property type="nucleotide sequence ID" value="XM_642445.1"/>
</dbReference>
<dbReference type="SMR" id="Q55FJ6"/>
<dbReference type="FunCoup" id="Q55FJ6">
    <property type="interactions" value="11"/>
</dbReference>
<dbReference type="STRING" id="44689.Q55FJ6"/>
<dbReference type="PaxDb" id="44689-DDB0229430"/>
<dbReference type="EnsemblProtists" id="EAL73492">
    <property type="protein sequence ID" value="EAL73492"/>
    <property type="gene ID" value="DDB_G0268078"/>
</dbReference>
<dbReference type="GeneID" id="8616344"/>
<dbReference type="KEGG" id="ddi:DDB_G0268078"/>
<dbReference type="dictyBase" id="DDB_G0268078"/>
<dbReference type="VEuPathDB" id="AmoebaDB:DDB_G0268078"/>
<dbReference type="eggNOG" id="KOG0661">
    <property type="taxonomic scope" value="Eukaryota"/>
</dbReference>
<dbReference type="HOGENOM" id="CLU_000288_181_1_1"/>
<dbReference type="InParanoid" id="Q55FJ6"/>
<dbReference type="OMA" id="RDELICV"/>
<dbReference type="PhylomeDB" id="Q55FJ6"/>
<dbReference type="PRO" id="PR:Q55FJ6"/>
<dbReference type="Proteomes" id="UP000002195">
    <property type="component" value="Chromosome 1"/>
</dbReference>
<dbReference type="GO" id="GO:0005737">
    <property type="term" value="C:cytoplasm"/>
    <property type="evidence" value="ECO:0000318"/>
    <property type="project" value="GO_Central"/>
</dbReference>
<dbReference type="GO" id="GO:0005634">
    <property type="term" value="C:nucleus"/>
    <property type="evidence" value="ECO:0000318"/>
    <property type="project" value="GO_Central"/>
</dbReference>
<dbReference type="GO" id="GO:0005524">
    <property type="term" value="F:ATP binding"/>
    <property type="evidence" value="ECO:0007669"/>
    <property type="project" value="UniProtKB-KW"/>
</dbReference>
<dbReference type="GO" id="GO:0004693">
    <property type="term" value="F:cyclin-dependent protein serine/threonine kinase activity"/>
    <property type="evidence" value="ECO:0007669"/>
    <property type="project" value="UniProtKB-EC"/>
</dbReference>
<dbReference type="GO" id="GO:0106310">
    <property type="term" value="F:protein serine kinase activity"/>
    <property type="evidence" value="ECO:0007669"/>
    <property type="project" value="RHEA"/>
</dbReference>
<dbReference type="GO" id="GO:0004674">
    <property type="term" value="F:protein serine/threonine kinase activity"/>
    <property type="evidence" value="ECO:0000318"/>
    <property type="project" value="GO_Central"/>
</dbReference>
<dbReference type="GO" id="GO:0035556">
    <property type="term" value="P:intracellular signal transduction"/>
    <property type="evidence" value="ECO:0000318"/>
    <property type="project" value="GO_Central"/>
</dbReference>
<dbReference type="CDD" id="cd07830">
    <property type="entry name" value="STKc_MAK_like"/>
    <property type="match status" value="1"/>
</dbReference>
<dbReference type="FunFam" id="3.30.200.20:FF:000545">
    <property type="entry name" value="CMGC family protein kinase"/>
    <property type="match status" value="1"/>
</dbReference>
<dbReference type="FunFam" id="1.10.510.10:FF:000645">
    <property type="entry name" value="Probable serine/threonine-protein kinase DDB_G0268078"/>
    <property type="match status" value="1"/>
</dbReference>
<dbReference type="Gene3D" id="3.30.200.20">
    <property type="entry name" value="Phosphorylase Kinase, domain 1"/>
    <property type="match status" value="1"/>
</dbReference>
<dbReference type="Gene3D" id="1.10.510.10">
    <property type="entry name" value="Transferase(Phosphotransferase) domain 1"/>
    <property type="match status" value="1"/>
</dbReference>
<dbReference type="InterPro" id="IPR011009">
    <property type="entry name" value="Kinase-like_dom_sf"/>
</dbReference>
<dbReference type="InterPro" id="IPR050117">
    <property type="entry name" value="MAP_kinase"/>
</dbReference>
<dbReference type="InterPro" id="IPR000719">
    <property type="entry name" value="Prot_kinase_dom"/>
</dbReference>
<dbReference type="InterPro" id="IPR017441">
    <property type="entry name" value="Protein_kinase_ATP_BS"/>
</dbReference>
<dbReference type="InterPro" id="IPR008271">
    <property type="entry name" value="Ser/Thr_kinase_AS"/>
</dbReference>
<dbReference type="PANTHER" id="PTHR24055">
    <property type="entry name" value="MITOGEN-ACTIVATED PROTEIN KINASE"/>
    <property type="match status" value="1"/>
</dbReference>
<dbReference type="Pfam" id="PF00069">
    <property type="entry name" value="Pkinase"/>
    <property type="match status" value="1"/>
</dbReference>
<dbReference type="SMART" id="SM00220">
    <property type="entry name" value="S_TKc"/>
    <property type="match status" value="1"/>
</dbReference>
<dbReference type="SUPFAM" id="SSF56112">
    <property type="entry name" value="Protein kinase-like (PK-like)"/>
    <property type="match status" value="1"/>
</dbReference>
<dbReference type="PROSITE" id="PS00107">
    <property type="entry name" value="PROTEIN_KINASE_ATP"/>
    <property type="match status" value="1"/>
</dbReference>
<dbReference type="PROSITE" id="PS50011">
    <property type="entry name" value="PROTEIN_KINASE_DOM"/>
    <property type="match status" value="1"/>
</dbReference>
<dbReference type="PROSITE" id="PS00108">
    <property type="entry name" value="PROTEIN_KINASE_ST"/>
    <property type="match status" value="1"/>
</dbReference>
<evidence type="ECO:0000255" key="1">
    <source>
        <dbReference type="PROSITE-ProRule" id="PRU00159"/>
    </source>
</evidence>
<evidence type="ECO:0000255" key="2">
    <source>
        <dbReference type="PROSITE-ProRule" id="PRU10027"/>
    </source>
</evidence>
<evidence type="ECO:0000256" key="3">
    <source>
        <dbReference type="SAM" id="MobiDB-lite"/>
    </source>
</evidence>
<evidence type="ECO:0000305" key="4"/>
<keyword id="KW-0067">ATP-binding</keyword>
<keyword id="KW-0418">Kinase</keyword>
<keyword id="KW-0547">Nucleotide-binding</keyword>
<keyword id="KW-1185">Reference proteome</keyword>
<keyword id="KW-0723">Serine/threonine-protein kinase</keyword>
<keyword id="KW-0808">Transferase</keyword>
<comment type="catalytic activity">
    <reaction>
        <text>L-seryl-[protein] + ATP = O-phospho-L-seryl-[protein] + ADP + H(+)</text>
        <dbReference type="Rhea" id="RHEA:17989"/>
        <dbReference type="Rhea" id="RHEA-COMP:9863"/>
        <dbReference type="Rhea" id="RHEA-COMP:11604"/>
        <dbReference type="ChEBI" id="CHEBI:15378"/>
        <dbReference type="ChEBI" id="CHEBI:29999"/>
        <dbReference type="ChEBI" id="CHEBI:30616"/>
        <dbReference type="ChEBI" id="CHEBI:83421"/>
        <dbReference type="ChEBI" id="CHEBI:456216"/>
        <dbReference type="EC" id="2.7.11.22"/>
    </reaction>
</comment>
<comment type="catalytic activity">
    <reaction>
        <text>L-threonyl-[protein] + ATP = O-phospho-L-threonyl-[protein] + ADP + H(+)</text>
        <dbReference type="Rhea" id="RHEA:46608"/>
        <dbReference type="Rhea" id="RHEA-COMP:11060"/>
        <dbReference type="Rhea" id="RHEA-COMP:11605"/>
        <dbReference type="ChEBI" id="CHEBI:15378"/>
        <dbReference type="ChEBI" id="CHEBI:30013"/>
        <dbReference type="ChEBI" id="CHEBI:30616"/>
        <dbReference type="ChEBI" id="CHEBI:61977"/>
        <dbReference type="ChEBI" id="CHEBI:456216"/>
        <dbReference type="EC" id="2.7.11.22"/>
    </reaction>
</comment>
<comment type="similarity">
    <text evidence="4">Belongs to the protein kinase superfamily. CMGC Ser/Thr protein kinase family. CDC2/CDKX subfamily.</text>
</comment>
<organism>
    <name type="scientific">Dictyostelium discoideum</name>
    <name type="common">Social amoeba</name>
    <dbReference type="NCBI Taxonomy" id="44689"/>
    <lineage>
        <taxon>Eukaryota</taxon>
        <taxon>Amoebozoa</taxon>
        <taxon>Evosea</taxon>
        <taxon>Eumycetozoa</taxon>
        <taxon>Dictyostelia</taxon>
        <taxon>Dictyosteliales</taxon>
        <taxon>Dictyosteliaceae</taxon>
        <taxon>Dictyostelium</taxon>
    </lineage>
</organism>
<protein>
    <recommendedName>
        <fullName>Probable serine/threonine-protein kinase DDB_G0268078</fullName>
        <ecNumber>2.7.11.22</ecNumber>
    </recommendedName>
</protein>
<reference key="1">
    <citation type="journal article" date="2005" name="Nature">
        <title>The genome of the social amoeba Dictyostelium discoideum.</title>
        <authorList>
            <person name="Eichinger L."/>
            <person name="Pachebat J.A."/>
            <person name="Gloeckner G."/>
            <person name="Rajandream M.A."/>
            <person name="Sucgang R."/>
            <person name="Berriman M."/>
            <person name="Song J."/>
            <person name="Olsen R."/>
            <person name="Szafranski K."/>
            <person name="Xu Q."/>
            <person name="Tunggal B."/>
            <person name="Kummerfeld S."/>
            <person name="Madera M."/>
            <person name="Konfortov B.A."/>
            <person name="Rivero F."/>
            <person name="Bankier A.T."/>
            <person name="Lehmann R."/>
            <person name="Hamlin N."/>
            <person name="Davies R."/>
            <person name="Gaudet P."/>
            <person name="Fey P."/>
            <person name="Pilcher K."/>
            <person name="Chen G."/>
            <person name="Saunders D."/>
            <person name="Sodergren E.J."/>
            <person name="Davis P."/>
            <person name="Kerhornou A."/>
            <person name="Nie X."/>
            <person name="Hall N."/>
            <person name="Anjard C."/>
            <person name="Hemphill L."/>
            <person name="Bason N."/>
            <person name="Farbrother P."/>
            <person name="Desany B."/>
            <person name="Just E."/>
            <person name="Morio T."/>
            <person name="Rost R."/>
            <person name="Churcher C.M."/>
            <person name="Cooper J."/>
            <person name="Haydock S."/>
            <person name="van Driessche N."/>
            <person name="Cronin A."/>
            <person name="Goodhead I."/>
            <person name="Muzny D.M."/>
            <person name="Mourier T."/>
            <person name="Pain A."/>
            <person name="Lu M."/>
            <person name="Harper D."/>
            <person name="Lindsay R."/>
            <person name="Hauser H."/>
            <person name="James K.D."/>
            <person name="Quiles M."/>
            <person name="Madan Babu M."/>
            <person name="Saito T."/>
            <person name="Buchrieser C."/>
            <person name="Wardroper A."/>
            <person name="Felder M."/>
            <person name="Thangavelu M."/>
            <person name="Johnson D."/>
            <person name="Knights A."/>
            <person name="Loulseged H."/>
            <person name="Mungall K.L."/>
            <person name="Oliver K."/>
            <person name="Price C."/>
            <person name="Quail M.A."/>
            <person name="Urushihara H."/>
            <person name="Hernandez J."/>
            <person name="Rabbinowitsch E."/>
            <person name="Steffen D."/>
            <person name="Sanders M."/>
            <person name="Ma J."/>
            <person name="Kohara Y."/>
            <person name="Sharp S."/>
            <person name="Simmonds M.N."/>
            <person name="Spiegler S."/>
            <person name="Tivey A."/>
            <person name="Sugano S."/>
            <person name="White B."/>
            <person name="Walker D."/>
            <person name="Woodward J.R."/>
            <person name="Winckler T."/>
            <person name="Tanaka Y."/>
            <person name="Shaulsky G."/>
            <person name="Schleicher M."/>
            <person name="Weinstock G.M."/>
            <person name="Rosenthal A."/>
            <person name="Cox E.C."/>
            <person name="Chisholm R.L."/>
            <person name="Gibbs R.A."/>
            <person name="Loomis W.F."/>
            <person name="Platzer M."/>
            <person name="Kay R.R."/>
            <person name="Williams J.G."/>
            <person name="Dear P.H."/>
            <person name="Noegel A.A."/>
            <person name="Barrell B.G."/>
            <person name="Kuspa A."/>
        </authorList>
    </citation>
    <scope>NUCLEOTIDE SEQUENCE [LARGE SCALE GENOMIC DNA]</scope>
    <source>
        <strain>AX4</strain>
    </source>
</reference>
<gene>
    <name type="ORF">DDB_G0268078</name>
</gene>
<feature type="chain" id="PRO_0000358903" description="Probable serine/threonine-protein kinase DDB_G0268078">
    <location>
        <begin position="1"/>
        <end position="507"/>
    </location>
</feature>
<feature type="domain" description="Protein kinase" evidence="1">
    <location>
        <begin position="4"/>
        <end position="286"/>
    </location>
</feature>
<feature type="region of interest" description="Disordered" evidence="3">
    <location>
        <begin position="323"/>
        <end position="364"/>
    </location>
</feature>
<feature type="region of interest" description="Disordered" evidence="3">
    <location>
        <begin position="381"/>
        <end position="404"/>
    </location>
</feature>
<feature type="region of interest" description="Disordered" evidence="3">
    <location>
        <begin position="428"/>
        <end position="507"/>
    </location>
</feature>
<feature type="compositionally biased region" description="Low complexity" evidence="3">
    <location>
        <begin position="323"/>
        <end position="347"/>
    </location>
</feature>
<feature type="compositionally biased region" description="Polar residues" evidence="3">
    <location>
        <begin position="348"/>
        <end position="361"/>
    </location>
</feature>
<feature type="compositionally biased region" description="Low complexity" evidence="3">
    <location>
        <begin position="381"/>
        <end position="399"/>
    </location>
</feature>
<feature type="compositionally biased region" description="Pro residues" evidence="3">
    <location>
        <begin position="429"/>
        <end position="450"/>
    </location>
</feature>
<feature type="compositionally biased region" description="Low complexity" evidence="3">
    <location>
        <begin position="451"/>
        <end position="470"/>
    </location>
</feature>
<feature type="compositionally biased region" description="Polar residues" evidence="3">
    <location>
        <begin position="471"/>
        <end position="481"/>
    </location>
</feature>
<feature type="compositionally biased region" description="Polar residues" evidence="3">
    <location>
        <begin position="491"/>
        <end position="507"/>
    </location>
</feature>
<feature type="active site" description="Proton acceptor" evidence="1 2">
    <location>
        <position position="125"/>
    </location>
</feature>
<feature type="binding site" evidence="1">
    <location>
        <begin position="10"/>
        <end position="18"/>
    </location>
    <ligand>
        <name>ATP</name>
        <dbReference type="ChEBI" id="CHEBI:30616"/>
    </ligand>
</feature>
<feature type="binding site" evidence="1">
    <location>
        <position position="33"/>
    </location>
    <ligand>
        <name>ATP</name>
        <dbReference type="ChEBI" id="CHEBI:30616"/>
    </ligand>
</feature>
<name>Y8078_DICDI</name>